<accession>A7RNZ0</accession>
<dbReference type="EMBL" id="DS469524">
    <property type="protein sequence ID" value="EDO46764.1"/>
    <property type="molecule type" value="Genomic_DNA"/>
</dbReference>
<dbReference type="RefSeq" id="XP_001638827.1">
    <property type="nucleotide sequence ID" value="XM_001638777.1"/>
</dbReference>
<dbReference type="SMR" id="A7RNZ0"/>
<dbReference type="STRING" id="45351.A7RNZ0"/>
<dbReference type="EnsemblMetazoa" id="EDO46764">
    <property type="protein sequence ID" value="EDO46764"/>
    <property type="gene ID" value="NEMVEDRAFT_v1g239676"/>
</dbReference>
<dbReference type="KEGG" id="nve:5518902"/>
<dbReference type="HOGENOM" id="CLU_748635_0_0_1"/>
<dbReference type="InParanoid" id="A7RNZ0"/>
<dbReference type="OMA" id="FMSTECT"/>
<dbReference type="OrthoDB" id="5987607at2759"/>
<dbReference type="Proteomes" id="UP000001593">
    <property type="component" value="Unassembled WGS sequence"/>
</dbReference>
<dbReference type="GO" id="GO:0005576">
    <property type="term" value="C:extracellular region"/>
    <property type="evidence" value="ECO:0007669"/>
    <property type="project" value="UniProtKB-SubCell"/>
</dbReference>
<dbReference type="GO" id="GO:0042151">
    <property type="term" value="C:nematocyst"/>
    <property type="evidence" value="ECO:0007669"/>
    <property type="project" value="UniProtKB-SubCell"/>
</dbReference>
<dbReference type="GO" id="GO:0090729">
    <property type="term" value="F:toxin activity"/>
    <property type="evidence" value="ECO:0007669"/>
    <property type="project" value="UniProtKB-KW"/>
</dbReference>
<dbReference type="InterPro" id="IPR003582">
    <property type="entry name" value="ShKT_dom"/>
</dbReference>
<dbReference type="Pfam" id="PF01549">
    <property type="entry name" value="ShK"/>
    <property type="match status" value="3"/>
</dbReference>
<dbReference type="PRINTS" id="PR01217">
    <property type="entry name" value="PRICHEXTENSN"/>
</dbReference>
<dbReference type="SMART" id="SM00254">
    <property type="entry name" value="ShKT"/>
    <property type="match status" value="2"/>
</dbReference>
<dbReference type="PROSITE" id="PS51670">
    <property type="entry name" value="SHKT"/>
    <property type="match status" value="2"/>
</dbReference>
<keyword id="KW-1015">Disulfide bond</keyword>
<keyword id="KW-0166">Nematocyst</keyword>
<keyword id="KW-1185">Reference proteome</keyword>
<keyword id="KW-0964">Secreted</keyword>
<keyword id="KW-0732">Signal</keyword>
<keyword id="KW-0800">Toxin</keyword>
<sequence length="370" mass="41553">MAWTLVLLVLLGTSSCLDAKELHKKIDISALLESGSGSGEEGSSGSGSAPEPVRDQDVDWKQFKIKPEQCLDKGENCTGDPEQCQENWQEMVVQCPFSCRFCSQRSIDDVTECTDARGAACKDWADNRNDCLRFPQFMSTECTKSCKLCGKETNGKKFDKDVRCIEWAKNGYCNEGELYKEKCPHNCEVHKSIKKEPKGPYPYPTESLYPYQYWQLYPAPGPAPYPPYPYPTAAPYPYQYSPYPYTPYPPPPYPNPYPQPPYPPPPPPYPNPYPQPPYPPPPAPCSGPGPCPYPGPPPPPYPAPTPYPPPPPPYPEQVPPPPPPPPPPPPPPPYPYPYPYPDESENTKHKSKKHAKHHEKHHKENHSKKS</sequence>
<reference evidence="9 10" key="1">
    <citation type="journal article" date="2007" name="Science">
        <title>Sea anemone genome reveals ancestral eumetazoan gene repertoire and genomic organization.</title>
        <authorList>
            <person name="Putnam N.H."/>
            <person name="Srivastava M."/>
            <person name="Hellsten U."/>
            <person name="Dirks B."/>
            <person name="Chapman J."/>
            <person name="Salamov A."/>
            <person name="Terry A."/>
            <person name="Shapiro H."/>
            <person name="Lindquist E."/>
            <person name="Kapitonov V.V."/>
            <person name="Jurka J."/>
            <person name="Genikhovich G."/>
            <person name="Grigoriev I.V."/>
            <person name="Lucas S.M."/>
            <person name="Steele R.E."/>
            <person name="Finnerty J.R."/>
            <person name="Technau U."/>
            <person name="Martindale M.Q."/>
            <person name="Rokhsar D.S."/>
        </authorList>
    </citation>
    <scope>NUCLEOTIDE SEQUENCE [LARGE SCALE GENOMIC DNA]</scope>
    <source>
        <strain evidence="10">CH2 X CH6</strain>
    </source>
</reference>
<reference key="2">
    <citation type="journal article" date="2013" name="Mar. Biotechnol.">
        <title>Analysis of soluble protein contents from the nematocysts of a model sea anemone sheds light on venom evolution.</title>
        <authorList>
            <person name="Moran Y."/>
            <person name="Praher D."/>
            <person name="Schlesinger A."/>
            <person name="Ayalon A."/>
            <person name="Tal Y."/>
            <person name="Technau U."/>
        </authorList>
    </citation>
    <scope>NUCLEOTIDE SEQUENCE [GENOMIC DNA]</scope>
    <scope>IDENTIFICATION BY MASS SPECTROMETRY</scope>
    <scope>SUBCELLULAR LOCATION</scope>
    <scope>TISSUE SPECIFICITY</scope>
</reference>
<reference key="3">
    <citation type="journal article" date="2018" name="Elife">
        <title>Dynamics of venom composition across a complex life cycle.</title>
        <authorList>
            <person name="Columbus-Shenkar Y.Y."/>
            <person name="Sachkova M.Y."/>
            <person name="Macrander J."/>
            <person name="Fridrich A."/>
            <person name="Modepalli V."/>
            <person name="Reitzel A.M."/>
            <person name="Sunagar K."/>
            <person name="Moran Y."/>
        </authorList>
    </citation>
    <scope>DEVELOPMENTAL STAGE</scope>
    <scope>TISSUE SPECIFICITY</scope>
    <scope>SUBCELLULAR LOCATION</scope>
</reference>
<protein>
    <recommendedName>
        <fullName evidence="6">Nematocyst expressed protein 4</fullName>
        <shortName evidence="6">NEP-4</shortName>
        <shortName evidence="7">NEP4</shortName>
    </recommendedName>
</protein>
<gene>
    <name evidence="9" type="ORF">v1g239676</name>
</gene>
<organism>
    <name type="scientific">Nematostella vectensis</name>
    <name type="common">Starlet sea anemone</name>
    <dbReference type="NCBI Taxonomy" id="45351"/>
    <lineage>
        <taxon>Eukaryota</taxon>
        <taxon>Metazoa</taxon>
        <taxon>Cnidaria</taxon>
        <taxon>Anthozoa</taxon>
        <taxon>Hexacorallia</taxon>
        <taxon>Actiniaria</taxon>
        <taxon>Edwardsiidae</taxon>
        <taxon>Nematostella</taxon>
    </lineage>
</organism>
<feature type="signal peptide" evidence="1">
    <location>
        <begin position="1"/>
        <end position="19"/>
    </location>
</feature>
<feature type="chain" id="PRO_5002713691" description="Nematocyst expressed protein 4" evidence="7">
    <location>
        <begin position="20"/>
        <end position="370"/>
    </location>
</feature>
<feature type="domain" description="ShKT 1" evidence="2">
    <location>
        <begin position="70"/>
        <end position="102"/>
    </location>
</feature>
<feature type="domain" description="ShKT 2" evidence="2">
    <location>
        <begin position="113"/>
        <end position="149"/>
    </location>
</feature>
<feature type="domain" description="ShKT 3" evidence="8">
    <location>
        <begin position="155"/>
        <end position="190"/>
    </location>
</feature>
<feature type="region of interest" description="Disordered" evidence="3">
    <location>
        <begin position="34"/>
        <end position="55"/>
    </location>
</feature>
<feature type="region of interest" description="Disordered" evidence="3">
    <location>
        <begin position="306"/>
        <end position="370"/>
    </location>
</feature>
<feature type="compositionally biased region" description="Gly residues" evidence="3">
    <location>
        <begin position="36"/>
        <end position="45"/>
    </location>
</feature>
<feature type="compositionally biased region" description="Pro residues" evidence="3">
    <location>
        <begin position="306"/>
        <end position="340"/>
    </location>
</feature>
<feature type="compositionally biased region" description="Basic residues" evidence="3">
    <location>
        <begin position="349"/>
        <end position="370"/>
    </location>
</feature>
<feature type="disulfide bond" evidence="2">
    <location>
        <begin position="70"/>
        <end position="102"/>
    </location>
</feature>
<feature type="disulfide bond" evidence="2">
    <location>
        <begin position="77"/>
        <end position="95"/>
    </location>
</feature>
<feature type="disulfide bond" evidence="2">
    <location>
        <begin position="84"/>
        <end position="99"/>
    </location>
</feature>
<feature type="disulfide bond" evidence="2">
    <location>
        <begin position="113"/>
        <end position="149"/>
    </location>
</feature>
<feature type="disulfide bond" evidence="2">
    <location>
        <begin position="121"/>
        <end position="142"/>
    </location>
</feature>
<feature type="disulfide bond" evidence="2">
    <location>
        <begin position="131"/>
        <end position="146"/>
    </location>
</feature>
<feature type="disulfide bond" evidence="7">
    <location>
        <begin position="164"/>
        <end position="183"/>
    </location>
</feature>
<feature type="disulfide bond" evidence="7">
    <location>
        <begin position="173"/>
        <end position="187"/>
    </location>
</feature>
<proteinExistence type="evidence at protein level"/>
<evidence type="ECO:0000255" key="1"/>
<evidence type="ECO:0000255" key="2">
    <source>
        <dbReference type="PROSITE-ProRule" id="PRU01005"/>
    </source>
</evidence>
<evidence type="ECO:0000256" key="3">
    <source>
        <dbReference type="SAM" id="MobiDB-lite"/>
    </source>
</evidence>
<evidence type="ECO:0000269" key="4">
    <source>
    </source>
</evidence>
<evidence type="ECO:0000269" key="5">
    <source>
    </source>
</evidence>
<evidence type="ECO:0000303" key="6">
    <source>
    </source>
</evidence>
<evidence type="ECO:0000305" key="7"/>
<evidence type="ECO:0000305" key="8">
    <source>
    </source>
</evidence>
<evidence type="ECO:0000312" key="9">
    <source>
        <dbReference type="EMBL" id="EDO46764.1"/>
    </source>
</evidence>
<evidence type="ECO:0000312" key="10">
    <source>
        <dbReference type="Proteomes" id="UP000001593"/>
    </source>
</evidence>
<comment type="subcellular location">
    <subcellularLocation>
        <location evidence="4">Nematocyst</location>
    </subcellularLocation>
    <subcellularLocation>
        <location evidence="4">Secreted</location>
    </subcellularLocation>
</comment>
<comment type="tissue specificity">
    <text evidence="4 5">Nematocytes (PubMed:23151943, PubMed:29424690). In late planulae, transcripts are found throughout the ectoderm in nematocytes, with high concentration of expressing cells in the oral pole (PubMed:29424690). In primary polyps, is expressed in nematocytes in the body wall and physa ectoderm and in the upper and lower pharynx (PubMed:29424690).</text>
</comment>
<comment type="developmental stage">
    <text evidence="5">Transcripts are expressed in gastrulae, early and late planulae, metamorphosing planulae, and primary polyps.</text>
</comment>
<comment type="similarity">
    <text evidence="7">Belongs to the NEP3 family.</text>
</comment>
<name>NEP4_NEMVE</name>